<evidence type="ECO:0000269" key="1">
    <source>
    </source>
</evidence>
<evidence type="ECO:0000305" key="2"/>
<organism>
    <name type="scientific">Streptococcus mutans</name>
    <dbReference type="NCBI Taxonomy" id="1309"/>
    <lineage>
        <taxon>Bacteria</taxon>
        <taxon>Bacillati</taxon>
        <taxon>Bacillota</taxon>
        <taxon>Bacilli</taxon>
        <taxon>Lactobacillales</taxon>
        <taxon>Streptococcaceae</taxon>
        <taxon>Streptococcus</taxon>
    </lineage>
</organism>
<sequence length="63" mass="6968">MSNTQLLEVLGTETFDVQEDLFAFDTTDTTIVASNDDPDTRFKSWSLCTPGCARTGSFNSYCC</sequence>
<proteinExistence type="evidence at protein level"/>
<keyword id="KW-0044">Antibiotic</keyword>
<keyword id="KW-0929">Antimicrobial</keyword>
<keyword id="KW-0078">Bacteriocin</keyword>
<keyword id="KW-0208">D-amino acid</keyword>
<keyword id="KW-0903">Direct protein sequencing</keyword>
<keyword id="KW-0425">Lantibiotic</keyword>
<keyword id="KW-0883">Thioether bond</keyword>
<name>LANN_STRMG</name>
<gene>
    <name type="primary">lanA</name>
    <name type="synonym">mutA</name>
</gene>
<protein>
    <recommendedName>
        <fullName>Lantibiotic mutacin-1140</fullName>
    </recommendedName>
    <alternativeName>
        <fullName>Mutacin III</fullName>
    </alternativeName>
</protein>
<dbReference type="EMBL" id="AF051560">
    <property type="protein sequence ID" value="AAC18827.1"/>
    <property type="molecule type" value="Genomic_DNA"/>
</dbReference>
<dbReference type="EMBL" id="AF154675">
    <property type="protein sequence ID" value="AAD56142.1"/>
    <property type="molecule type" value="Genomic_DNA"/>
</dbReference>
<dbReference type="RefSeq" id="WP_002268802.1">
    <property type="nucleotide sequence ID" value="NZ_LTAK01000001.1"/>
</dbReference>
<dbReference type="TCDB" id="1.C.20.1.8">
    <property type="family name" value="the nisin (nisin) family"/>
</dbReference>
<dbReference type="GO" id="GO:0005576">
    <property type="term" value="C:extracellular region"/>
    <property type="evidence" value="ECO:0007669"/>
    <property type="project" value="InterPro"/>
</dbReference>
<dbReference type="GO" id="GO:0005102">
    <property type="term" value="F:signaling receptor binding"/>
    <property type="evidence" value="ECO:0007669"/>
    <property type="project" value="UniProtKB-KW"/>
</dbReference>
<dbReference type="GO" id="GO:0042742">
    <property type="term" value="P:defense response to bacterium"/>
    <property type="evidence" value="ECO:0007669"/>
    <property type="project" value="UniProtKB-KW"/>
</dbReference>
<dbReference type="GO" id="GO:0031640">
    <property type="term" value="P:killing of cells of another organism"/>
    <property type="evidence" value="ECO:0007669"/>
    <property type="project" value="UniProtKB-KW"/>
</dbReference>
<dbReference type="InterPro" id="IPR006079">
    <property type="entry name" value="Lantibiotic_typ-A_Bacillales"/>
</dbReference>
<dbReference type="NCBIfam" id="TIGR03731">
    <property type="entry name" value="lantibio_gallid"/>
    <property type="match status" value="1"/>
</dbReference>
<dbReference type="NCBIfam" id="NF037999">
    <property type="entry name" value="mutacin"/>
    <property type="match status" value="1"/>
</dbReference>
<dbReference type="Pfam" id="PF02052">
    <property type="entry name" value="Gallidermin"/>
    <property type="match status" value="1"/>
</dbReference>
<dbReference type="PRINTS" id="PR00323">
    <property type="entry name" value="GALLIDERMIN"/>
</dbReference>
<reference key="1">
    <citation type="journal article" date="1998" name="Infect. Immun.">
        <title>Genetic and biochemical analysis of mutacin 1140, a lantibiotic from Streptococcus mutans.</title>
        <authorList>
            <person name="Hillman J.D."/>
            <person name="Novak J."/>
            <person name="Sagura E."/>
            <person name="Gutierrez J.A."/>
            <person name="Brooks T.A."/>
            <person name="Crowley P.J."/>
            <person name="Hess M."/>
            <person name="Azizi A."/>
            <person name="Leung K.-P."/>
            <person name="Cvitkovitch D."/>
            <person name="Bleiweis A.S."/>
        </authorList>
    </citation>
    <scope>NUCLEOTIDE SEQUENCE [GENOMIC DNA]</scope>
    <source>
        <strain>JH1005</strain>
    </source>
</reference>
<reference key="2">
    <citation type="journal article" date="1999" name="Appl. Environ. Microbiol.">
        <title>Purification of mutacin III from group III Streptococcus mutans UA787 and genetic analyses of mutacin III biosynthesis genes.</title>
        <authorList>
            <person name="Qi F."/>
            <person name="Chen P."/>
            <person name="Caufield P.W."/>
        </authorList>
    </citation>
    <scope>NUCLEOTIDE SEQUENCE [GENOMIC DNA]</scope>
    <source>
        <strain>UA787</strain>
    </source>
</reference>
<reference key="3">
    <citation type="journal article" date="2000" name="Eur. J. Biochem.">
        <title>Covalent structure of mutacin 1140 and a novel method for the rapid identification of lantibiotics.</title>
        <authorList>
            <person name="Smith L."/>
            <person name="Novak J."/>
            <person name="Rocca J."/>
            <person name="McClung S."/>
            <person name="Hillman J.D."/>
            <person name="Edison A.S."/>
        </authorList>
    </citation>
    <scope>PROTEIN SEQUENCE OF 42-63</scope>
    <scope>IDENTIFICATION BY MASS SPECTROMETRY</scope>
    <scope>STRUCTURE BY NMR</scope>
    <scope>DEHYDRATION AT SER-46 AND THR-55</scope>
    <scope>LANTHIONINE CROSS-LINKS</scope>
</reference>
<feature type="propeptide" id="PRO_0000017130" evidence="1">
    <location>
        <begin position="1"/>
        <end position="41"/>
    </location>
</feature>
<feature type="peptide" id="PRO_0000017131" description="Lantibiotic mutacin-1140">
    <location>
        <begin position="42"/>
        <end position="63"/>
    </location>
</feature>
<feature type="modified residue" description="2,3-didehydroalanine (Ser)" evidence="1">
    <location>
        <position position="46"/>
    </location>
</feature>
<feature type="modified residue" description="2,3-didehydrobutyrine" evidence="1">
    <location>
        <position position="55"/>
    </location>
</feature>
<feature type="cross-link" description="Lanthionine (Ser-Cys)" evidence="1">
    <location>
        <begin position="44"/>
        <end position="48"/>
    </location>
</feature>
<feature type="cross-link" description="Beta-methyllanthionine (Thr-Cys)" evidence="1">
    <location>
        <begin position="49"/>
        <end position="52"/>
    </location>
</feature>
<feature type="cross-link" description="Lanthionine (Ser-Cys)" evidence="1">
    <location>
        <begin position="57"/>
        <end position="62"/>
    </location>
</feature>
<feature type="cross-link" description="S-(2-aminovinyl)-D-cysteine (Ser-Cys)" evidence="1">
    <location>
        <begin position="60"/>
        <end position="63"/>
    </location>
</feature>
<accession>O68586</accession>
<comment type="function">
    <text>Lanthionine-containing peptide antibiotic (lantibiotic) active on Gram-positive bacteria. The bactericidal activity of lantibiotics is based on depolarization of energized bacterial cytoplasmic membranes, initiated by the formation of aqueous transmembrane pores.</text>
</comment>
<comment type="PTM">
    <text>Maturation of lantibiotics involves the enzymatic conversion of Thr, and Ser into dehydrated AA and the formation of thioether bonds with cysteine. The C-terminal lanthionine undergoes decarboxylation. This is followed by membrane translocation and cleavage of the modified precursor.</text>
</comment>
<comment type="PTM">
    <text>The structure of the 2,3-didehydrobutyrine is not discussed in PubMed:11082191.</text>
</comment>
<comment type="similarity">
    <text evidence="2">Belongs to the type A lantibiotic family.</text>
</comment>